<proteinExistence type="evidence at protein level"/>
<dbReference type="EMBL" id="AY437838">
    <property type="protein sequence ID" value="AAR91792.1"/>
    <property type="molecule type" value="Genomic_DNA"/>
</dbReference>
<dbReference type="EMBL" id="FN869568">
    <property type="protein sequence ID" value="CBV41254.1"/>
    <property type="molecule type" value="Genomic_DNA"/>
</dbReference>
<dbReference type="RefSeq" id="WP_013331126.1">
    <property type="nucleotide sequence ID" value="NC_014532.2"/>
</dbReference>
<dbReference type="SMR" id="E1V6C5"/>
<dbReference type="STRING" id="768066.HELO_1371"/>
<dbReference type="TCDB" id="2.A.38.1.3">
    <property type="family name" value="the k(+) transporter (trk) family"/>
</dbReference>
<dbReference type="GeneID" id="91008580"/>
<dbReference type="KEGG" id="hel:HELO_1371"/>
<dbReference type="eggNOG" id="COG0168">
    <property type="taxonomic scope" value="Bacteria"/>
</dbReference>
<dbReference type="HOGENOM" id="CLU_030708_0_2_6"/>
<dbReference type="OrthoDB" id="9810952at2"/>
<dbReference type="Proteomes" id="UP000008707">
    <property type="component" value="Chromosome"/>
</dbReference>
<dbReference type="GO" id="GO:0005886">
    <property type="term" value="C:plasma membrane"/>
    <property type="evidence" value="ECO:0007669"/>
    <property type="project" value="UniProtKB-SubCell"/>
</dbReference>
<dbReference type="GO" id="GO:0015379">
    <property type="term" value="F:potassium:chloride symporter activity"/>
    <property type="evidence" value="ECO:0007669"/>
    <property type="project" value="InterPro"/>
</dbReference>
<dbReference type="InterPro" id="IPR003445">
    <property type="entry name" value="Cat_transpt"/>
</dbReference>
<dbReference type="InterPro" id="IPR004772">
    <property type="entry name" value="TrkH"/>
</dbReference>
<dbReference type="NCBIfam" id="TIGR00933">
    <property type="entry name" value="2a38"/>
    <property type="match status" value="1"/>
</dbReference>
<dbReference type="PANTHER" id="PTHR32024">
    <property type="entry name" value="TRK SYSTEM POTASSIUM UPTAKE PROTEIN TRKG-RELATED"/>
    <property type="match status" value="1"/>
</dbReference>
<dbReference type="PANTHER" id="PTHR32024:SF2">
    <property type="entry name" value="TRK SYSTEM POTASSIUM UPTAKE PROTEIN TRKG-RELATED"/>
    <property type="match status" value="1"/>
</dbReference>
<dbReference type="Pfam" id="PF02386">
    <property type="entry name" value="TrkH"/>
    <property type="match status" value="1"/>
</dbReference>
<dbReference type="PIRSF" id="PIRSF006247">
    <property type="entry name" value="TrkH"/>
    <property type="match status" value="1"/>
</dbReference>
<organism>
    <name type="scientific">Halomonas elongata (strain ATCC 33173 / DSM 2581 / NBRC 15536 / NCIMB 2198 / 1H9)</name>
    <dbReference type="NCBI Taxonomy" id="768066"/>
    <lineage>
        <taxon>Bacteria</taxon>
        <taxon>Pseudomonadati</taxon>
        <taxon>Pseudomonadota</taxon>
        <taxon>Gammaproteobacteria</taxon>
        <taxon>Oceanospirillales</taxon>
        <taxon>Halomonadaceae</taxon>
        <taxon>Halomonas</taxon>
    </lineage>
</organism>
<evidence type="ECO:0000250" key="1"/>
<evidence type="ECO:0000255" key="2"/>
<evidence type="ECO:0000269" key="3">
    <source>
    </source>
</evidence>
<evidence type="ECO:0000305" key="4"/>
<keyword id="KW-0997">Cell inner membrane</keyword>
<keyword id="KW-1003">Cell membrane</keyword>
<keyword id="KW-0406">Ion transport</keyword>
<keyword id="KW-0472">Membrane</keyword>
<keyword id="KW-0630">Potassium</keyword>
<keyword id="KW-0633">Potassium transport</keyword>
<keyword id="KW-0812">Transmembrane</keyword>
<keyword id="KW-1133">Transmembrane helix</keyword>
<keyword id="KW-0813">Transport</keyword>
<gene>
    <name type="primary">trkH</name>
    <name type="ordered locus">HELO_1371</name>
</gene>
<comment type="function">
    <text evidence="3">Low-affinity potassium transport system. Probably interacts with Trk system potassium uptake protein TrkA.</text>
</comment>
<comment type="biophysicochemical properties">
    <kinetics>
        <Vmax evidence="3">137.0 nmol/min/mg enzyme</Vmax>
        <text>The K(+) uptake does not follow the Michaelis-Menten kinetics.</text>
    </kinetics>
</comment>
<comment type="subcellular location">
    <subcellularLocation>
        <location evidence="1">Cell inner membrane</location>
        <topology evidence="1">Multi-pass membrane protein</topology>
    </subcellularLocation>
</comment>
<comment type="similarity">
    <text evidence="4">Belongs to the TrkH potassium transport family.</text>
</comment>
<accession>E1V6C5</accession>
<accession>Q6T3V7</accession>
<name>TRKH_HALED</name>
<feature type="chain" id="PRO_0000430038" description="Trk system potassium uptake protein TrkH">
    <location>
        <begin position="1"/>
        <end position="482"/>
    </location>
</feature>
<feature type="transmembrane region" description="Helical" evidence="2">
    <location>
        <begin position="9"/>
        <end position="29"/>
    </location>
</feature>
<feature type="transmembrane region" description="Helical" evidence="2">
    <location>
        <begin position="35"/>
        <end position="55"/>
    </location>
</feature>
<feature type="transmembrane region" description="Helical" evidence="2">
    <location>
        <begin position="70"/>
        <end position="90"/>
    </location>
</feature>
<feature type="transmembrane region" description="Helical" evidence="2">
    <location>
        <begin position="136"/>
        <end position="156"/>
    </location>
</feature>
<feature type="transmembrane region" description="Helical" evidence="2">
    <location>
        <begin position="185"/>
        <end position="205"/>
    </location>
</feature>
<feature type="transmembrane region" description="Helical" evidence="2">
    <location>
        <begin position="240"/>
        <end position="260"/>
    </location>
</feature>
<feature type="transmembrane region" description="Helical" evidence="2">
    <location>
        <begin position="276"/>
        <end position="296"/>
    </location>
</feature>
<feature type="transmembrane region" description="Helical" evidence="2">
    <location>
        <begin position="325"/>
        <end position="345"/>
    </location>
</feature>
<feature type="transmembrane region" description="Helical" evidence="2">
    <location>
        <begin position="395"/>
        <end position="415"/>
    </location>
</feature>
<feature type="transmembrane region" description="Helical" evidence="2">
    <location>
        <begin position="455"/>
        <end position="475"/>
    </location>
</feature>
<reference key="1">
    <citation type="journal article" date="2005" name="J. Bacteriol.">
        <title>Potassium transport in a halophilic member of the bacteria domain: identification and characterization of the K+ uptake systems TrkH and TrkI from Halomonas elongata DSM 2581T.</title>
        <authorList>
            <person name="Kraegeloh A."/>
            <person name="Amendt B."/>
            <person name="Kunte H.J."/>
        </authorList>
    </citation>
    <scope>NUCLEOTIDE SEQUENCE [GENOMIC DNA]</scope>
    <scope>FUNCTION</scope>
    <scope>BIOPHYSICOCHEMICAL PROPERTIES</scope>
    <scope>GENE NAME</scope>
    <source>
        <strain>ATCC 33173 / DSM 2581 / NBRC 15536 / NCIMB 2198 / 1H9</strain>
    </source>
</reference>
<reference key="2">
    <citation type="journal article" date="2011" name="Environ. Microbiol.">
        <title>A blueprint of ectoine metabolism from the genome of the industrial producer Halomonas elongata DSM 2581(T).</title>
        <authorList>
            <person name="Schwibbert K."/>
            <person name="Marin-Sanguino A."/>
            <person name="Bagyan I."/>
            <person name="Heidrich G."/>
            <person name="Lentzen G."/>
            <person name="Seitz H."/>
            <person name="Rampp M."/>
            <person name="Schuster S.C."/>
            <person name="Klenk H.P."/>
            <person name="Pfeiffer F."/>
            <person name="Oesterhelt D."/>
            <person name="Kunte H.J."/>
        </authorList>
    </citation>
    <scope>NUCLEOTIDE SEQUENCE [LARGE SCALE GENOMIC DNA]</scope>
    <source>
        <strain>ATCC 33173 / DSM 2581 / NBRC 15536 / NCIMB 2198 / 1H9</strain>
    </source>
</reference>
<protein>
    <recommendedName>
        <fullName>Trk system potassium uptake protein TrkH</fullName>
    </recommendedName>
</protein>
<sequence length="482" mass="52082">MSLRMILRILGLLLMMFSLTMVPPILISLLFADGMWQAFVVALGITVGTGALMYLPNRHARKELRTRDGFLIAALFWSVLGLFGSLPLMLTGAAALSPTDAVFESFSGLTTTGATVITGIDLLPEAILYYRQQLQWLGGMGIVVLAVAILPTLGVGGMALYRTEIPGPLKDSKLTPRITETAKALWYIYATLTVTCALAYMAAGMNWFDALGHSFSTVAIGGFSTHDASIGYFDSAAIELICSAFLLISAFSFSLHFVAWRERRLTHYFQDPEARFLMLFLAGLIIITSVSLWLTSDYETLQGLRHAVFEVVSIATTAGFSVADFSTWPGALPFLLFVAAFVGGCSGSTGGGMKVIRIILILKQGMREVMRLIHPSAVIAVKIGKVSVPDGIAQAVWGFFSAYVLLFFLMLVGVMATGVDQVTAWSTVGATLNNLGPALGEASAHYGDLPSLAKWILVVAMLLGRLEIFTVVVLFTPAFWRK</sequence>